<protein>
    <recommendedName>
        <fullName evidence="1">Glutamyl-tRNA(Gln) amidotransferase subunit A, mitochondrial</fullName>
        <shortName evidence="1">Glu-AdT subunit A</shortName>
        <ecNumber evidence="1">6.3.5.7</ecNumber>
    </recommendedName>
    <alternativeName>
        <fullName evidence="1">Glutaminyl-tRNA synthase-like protein 1</fullName>
    </alternativeName>
</protein>
<keyword id="KW-0067">ATP-binding</keyword>
<keyword id="KW-0436">Ligase</keyword>
<keyword id="KW-0496">Mitochondrion</keyword>
<keyword id="KW-0547">Nucleotide-binding</keyword>
<keyword id="KW-0648">Protein biosynthesis</keyword>
<keyword id="KW-1185">Reference proteome</keyword>
<proteinExistence type="evidence at transcript level"/>
<reference key="1">
    <citation type="submission" date="2003-01" db="EMBL/GenBank/DDBJ databases">
        <authorList>
            <consortium name="NIH - Xenopus Gene Collection (XGC) project"/>
        </authorList>
    </citation>
    <scope>NUCLEOTIDE SEQUENCE [LARGE SCALE MRNA]</scope>
    <source>
        <tissue>Embryo</tissue>
    </source>
</reference>
<organism>
    <name type="scientific">Xenopus laevis</name>
    <name type="common">African clawed frog</name>
    <dbReference type="NCBI Taxonomy" id="8355"/>
    <lineage>
        <taxon>Eukaryota</taxon>
        <taxon>Metazoa</taxon>
        <taxon>Chordata</taxon>
        <taxon>Craniata</taxon>
        <taxon>Vertebrata</taxon>
        <taxon>Euteleostomi</taxon>
        <taxon>Amphibia</taxon>
        <taxon>Batrachia</taxon>
        <taxon>Anura</taxon>
        <taxon>Pipoidea</taxon>
        <taxon>Pipidae</taxon>
        <taxon>Xenopodinae</taxon>
        <taxon>Xenopus</taxon>
        <taxon>Xenopus</taxon>
    </lineage>
</organism>
<sequence>MLGMSLREAAAVLRLGQVKPTELCQKCLSLIKETSFLNAYITITEDIALKQAAEADKRFAQGKPLGELDGIPIAIKDNFSTAGIETTCASRMLKGYVAPYNATVVQKLFDQGAVLMGKTNLDEFGMGSGSTDSIFGPVRNPWSYSRSYIEKRPISHHAAKDDSDWVIAGGSSGGSACAVSAGTCYLAIGSDTGGSTRNPASHCGVVGLKPTYGLVSRHGLIPLVNSMDIPGILTRCVDDAATVLGMLAGHDLYDSTTVQDPFQPFSLPETIDLSNLCIGIPKEYHAPGLSTEILSLWSKTADLLEKAGAKVMEVSLPHTPYSIVCYHVLCTAEVASNMARFDGLEYGHRSDIDDSTEAMYAATRREGFNDVVRGRILSGNYFLLKQNYEKYFVKAQKVRRLIADDFVKVFNSGVHVLLTPTTLGDAAPYLEFIQEDNRTRSAEEDVFTQCTNMAGLPAVTVPAGLSSRGLPLGLQFIGRAFCERQLLTVAKWCEKQMDFSPLQFNRDLGNGSIVLQYSKSASFV</sequence>
<accession>Q8AVG9</accession>
<evidence type="ECO:0000255" key="1">
    <source>
        <dbReference type="HAMAP-Rule" id="MF_03150"/>
    </source>
</evidence>
<feature type="chain" id="PRO_0000316771" description="Glutamyl-tRNA(Gln) amidotransferase subunit A, mitochondrial">
    <location>
        <begin position="1"/>
        <end position="524"/>
    </location>
</feature>
<feature type="active site" description="Charge relay system" evidence="1">
    <location>
        <position position="76"/>
    </location>
</feature>
<feature type="active site" description="Charge relay system" evidence="1">
    <location>
        <position position="171"/>
    </location>
</feature>
<feature type="active site" description="Acyl-ester intermediate" evidence="1">
    <location>
        <position position="195"/>
    </location>
</feature>
<gene>
    <name type="primary">qrsl1</name>
</gene>
<comment type="function">
    <text evidence="1">Allows the formation of correctly charged Gln-tRNA(Gln) through the transamidation of misacylated Glu-tRNA(Gln) in the mitochondria. The reaction takes place in the presence of glutamine and ATP through an activated gamma-phospho-Glu-tRNA(Gln).</text>
</comment>
<comment type="catalytic activity">
    <reaction evidence="1">
        <text>L-glutamyl-tRNA(Gln) + L-glutamine + ATP + H2O = L-glutaminyl-tRNA(Gln) + L-glutamate + ADP + phosphate + H(+)</text>
        <dbReference type="Rhea" id="RHEA:17521"/>
        <dbReference type="Rhea" id="RHEA-COMP:9681"/>
        <dbReference type="Rhea" id="RHEA-COMP:9684"/>
        <dbReference type="ChEBI" id="CHEBI:15377"/>
        <dbReference type="ChEBI" id="CHEBI:15378"/>
        <dbReference type="ChEBI" id="CHEBI:29985"/>
        <dbReference type="ChEBI" id="CHEBI:30616"/>
        <dbReference type="ChEBI" id="CHEBI:43474"/>
        <dbReference type="ChEBI" id="CHEBI:58359"/>
        <dbReference type="ChEBI" id="CHEBI:78520"/>
        <dbReference type="ChEBI" id="CHEBI:78521"/>
        <dbReference type="ChEBI" id="CHEBI:456216"/>
        <dbReference type="EC" id="6.3.5.7"/>
    </reaction>
</comment>
<comment type="subunit">
    <text evidence="1">Subunit of the heterotrimeric GatCAB amidotransferase (AdT) complex, composed of A (qrsl1), B (gatb) and C (gatc) subunits.</text>
</comment>
<comment type="subcellular location">
    <subcellularLocation>
        <location evidence="1">Mitochondrion</location>
    </subcellularLocation>
</comment>
<comment type="similarity">
    <text evidence="1">Belongs to the amidase family. GatA subfamily.</text>
</comment>
<name>GATA_XENLA</name>
<dbReference type="EC" id="6.3.5.7" evidence="1"/>
<dbReference type="EMBL" id="BC042285">
    <property type="protein sequence ID" value="AAH42285.1"/>
    <property type="molecule type" value="mRNA"/>
</dbReference>
<dbReference type="RefSeq" id="NP_001080891.1">
    <property type="nucleotide sequence ID" value="NM_001087422.1"/>
</dbReference>
<dbReference type="SMR" id="Q8AVG9"/>
<dbReference type="DNASU" id="380585"/>
<dbReference type="GeneID" id="380585"/>
<dbReference type="KEGG" id="xla:380585"/>
<dbReference type="AGR" id="Xenbase:XB-GENE-5787983"/>
<dbReference type="CTD" id="380585"/>
<dbReference type="Xenbase" id="XB-GENE-5787983">
    <property type="gene designation" value="qrsl1.L"/>
</dbReference>
<dbReference type="OrthoDB" id="421993at2759"/>
<dbReference type="Proteomes" id="UP000186698">
    <property type="component" value="Chromosome 5L"/>
</dbReference>
<dbReference type="Bgee" id="380585">
    <property type="expression patterns" value="Expressed in testis and 19 other cell types or tissues"/>
</dbReference>
<dbReference type="GO" id="GO:0030956">
    <property type="term" value="C:glutamyl-tRNA(Gln) amidotransferase complex"/>
    <property type="evidence" value="ECO:0000318"/>
    <property type="project" value="GO_Central"/>
</dbReference>
<dbReference type="GO" id="GO:0005739">
    <property type="term" value="C:mitochondrion"/>
    <property type="evidence" value="ECO:0000318"/>
    <property type="project" value="GO_Central"/>
</dbReference>
<dbReference type="GO" id="GO:0005524">
    <property type="term" value="F:ATP binding"/>
    <property type="evidence" value="ECO:0007669"/>
    <property type="project" value="UniProtKB-KW"/>
</dbReference>
<dbReference type="GO" id="GO:0050567">
    <property type="term" value="F:glutaminyl-tRNA synthase (glutamine-hydrolyzing) activity"/>
    <property type="evidence" value="ECO:0000318"/>
    <property type="project" value="GO_Central"/>
</dbReference>
<dbReference type="GO" id="GO:0070681">
    <property type="term" value="P:glutaminyl-tRNAGln biosynthesis via transamidation"/>
    <property type="evidence" value="ECO:0000318"/>
    <property type="project" value="GO_Central"/>
</dbReference>
<dbReference type="GO" id="GO:0032543">
    <property type="term" value="P:mitochondrial translation"/>
    <property type="evidence" value="ECO:0000318"/>
    <property type="project" value="GO_Central"/>
</dbReference>
<dbReference type="FunFam" id="3.90.1300.10:FF:000002">
    <property type="entry name" value="Glutamyl-tRNA(Gln) amidotransferase subunit A, mitochondrial"/>
    <property type="match status" value="1"/>
</dbReference>
<dbReference type="Gene3D" id="3.90.1300.10">
    <property type="entry name" value="Amidase signature (AS) domain"/>
    <property type="match status" value="1"/>
</dbReference>
<dbReference type="HAMAP" id="MF_00120">
    <property type="entry name" value="GatA"/>
    <property type="match status" value="1"/>
</dbReference>
<dbReference type="InterPro" id="IPR000120">
    <property type="entry name" value="Amidase"/>
</dbReference>
<dbReference type="InterPro" id="IPR023631">
    <property type="entry name" value="Amidase_dom"/>
</dbReference>
<dbReference type="InterPro" id="IPR036928">
    <property type="entry name" value="AS_sf"/>
</dbReference>
<dbReference type="InterPro" id="IPR004412">
    <property type="entry name" value="GatA"/>
</dbReference>
<dbReference type="PANTHER" id="PTHR11895:SF7">
    <property type="entry name" value="GLUTAMYL-TRNA(GLN) AMIDOTRANSFERASE SUBUNIT A, MITOCHONDRIAL"/>
    <property type="match status" value="1"/>
</dbReference>
<dbReference type="PANTHER" id="PTHR11895">
    <property type="entry name" value="TRANSAMIDASE"/>
    <property type="match status" value="1"/>
</dbReference>
<dbReference type="Pfam" id="PF01425">
    <property type="entry name" value="Amidase"/>
    <property type="match status" value="2"/>
</dbReference>
<dbReference type="SUPFAM" id="SSF75304">
    <property type="entry name" value="Amidase signature (AS) enzymes"/>
    <property type="match status" value="1"/>
</dbReference>